<sequence>MPTDAKRPLQLNDQGQLRHFISLDGLPRELLTEILDTADSFLEVGARAVKKVPLLRGKTVCNVFFENSTRTRTTFELAAQRLSADVISLNVSTSSTSKGETLTDTLRNLEAMAADMFVVRHSDSGAAHFIAEHVSPNVAVINGGDGRHAHPTQGMLDMLTIRRHKGNFEQLSVAIVGDILHSRVARSNMLALKTLGCPDIRVIAPRTLLPIGLEEQYGVRVFTNADEGLKDVDVVIMLRLQRERMQGGLLPSEGEFFKLYGLTEKRLKLAKPDAIVMHPGPINRGVEIESAVADGAQSVILNQVTYGIAIRMAVLSMAMSGQNTQRQLEQEDAE</sequence>
<keyword id="KW-0665">Pyrimidine biosynthesis</keyword>
<keyword id="KW-0808">Transferase</keyword>
<protein>
    <recommendedName>
        <fullName evidence="1">Aspartate carbamoyltransferase catalytic subunit</fullName>
        <ecNumber evidence="1">2.1.3.2</ecNumber>
    </recommendedName>
    <alternativeName>
        <fullName evidence="1">Aspartate transcarbamylase</fullName>
        <shortName evidence="1">ATCase</shortName>
    </alternativeName>
</protein>
<proteinExistence type="inferred from homology"/>
<accession>Q02U10</accession>
<gene>
    <name evidence="1" type="primary">pyrB</name>
    <name type="ordered locus">PA14_05260</name>
</gene>
<reference key="1">
    <citation type="journal article" date="2006" name="Genome Biol.">
        <title>Genomic analysis reveals that Pseudomonas aeruginosa virulence is combinatorial.</title>
        <authorList>
            <person name="Lee D.G."/>
            <person name="Urbach J.M."/>
            <person name="Wu G."/>
            <person name="Liberati N.T."/>
            <person name="Feinbaum R.L."/>
            <person name="Miyata S."/>
            <person name="Diggins L.T."/>
            <person name="He J."/>
            <person name="Saucier M."/>
            <person name="Deziel E."/>
            <person name="Friedman L."/>
            <person name="Li L."/>
            <person name="Grills G."/>
            <person name="Montgomery K."/>
            <person name="Kucherlapati R."/>
            <person name="Rahme L.G."/>
            <person name="Ausubel F.M."/>
        </authorList>
    </citation>
    <scope>NUCLEOTIDE SEQUENCE [LARGE SCALE GENOMIC DNA]</scope>
    <source>
        <strain>UCBPP-PA14</strain>
    </source>
</reference>
<organism>
    <name type="scientific">Pseudomonas aeruginosa (strain UCBPP-PA14)</name>
    <dbReference type="NCBI Taxonomy" id="208963"/>
    <lineage>
        <taxon>Bacteria</taxon>
        <taxon>Pseudomonadati</taxon>
        <taxon>Pseudomonadota</taxon>
        <taxon>Gammaproteobacteria</taxon>
        <taxon>Pseudomonadales</taxon>
        <taxon>Pseudomonadaceae</taxon>
        <taxon>Pseudomonas</taxon>
    </lineage>
</organism>
<name>PYRB_PSEAB</name>
<evidence type="ECO:0000255" key="1">
    <source>
        <dbReference type="HAMAP-Rule" id="MF_00001"/>
    </source>
</evidence>
<feature type="chain" id="PRO_0000301607" description="Aspartate carbamoyltransferase catalytic subunit">
    <location>
        <begin position="1"/>
        <end position="334"/>
    </location>
</feature>
<feature type="binding site" evidence="1">
    <location>
        <position position="70"/>
    </location>
    <ligand>
        <name>carbamoyl phosphate</name>
        <dbReference type="ChEBI" id="CHEBI:58228"/>
    </ligand>
</feature>
<feature type="binding site" evidence="1">
    <location>
        <position position="71"/>
    </location>
    <ligand>
        <name>carbamoyl phosphate</name>
        <dbReference type="ChEBI" id="CHEBI:58228"/>
    </ligand>
</feature>
<feature type="binding site" evidence="1">
    <location>
        <position position="98"/>
    </location>
    <ligand>
        <name>L-aspartate</name>
        <dbReference type="ChEBI" id="CHEBI:29991"/>
    </ligand>
</feature>
<feature type="binding site" evidence="1">
    <location>
        <position position="120"/>
    </location>
    <ligand>
        <name>carbamoyl phosphate</name>
        <dbReference type="ChEBI" id="CHEBI:58228"/>
    </ligand>
</feature>
<feature type="binding site" evidence="1">
    <location>
        <position position="150"/>
    </location>
    <ligand>
        <name>carbamoyl phosphate</name>
        <dbReference type="ChEBI" id="CHEBI:58228"/>
    </ligand>
</feature>
<feature type="binding site" evidence="1">
    <location>
        <position position="153"/>
    </location>
    <ligand>
        <name>carbamoyl phosphate</name>
        <dbReference type="ChEBI" id="CHEBI:58228"/>
    </ligand>
</feature>
<feature type="binding site" evidence="1">
    <location>
        <position position="183"/>
    </location>
    <ligand>
        <name>L-aspartate</name>
        <dbReference type="ChEBI" id="CHEBI:29991"/>
    </ligand>
</feature>
<feature type="binding site" evidence="1">
    <location>
        <position position="239"/>
    </location>
    <ligand>
        <name>L-aspartate</name>
        <dbReference type="ChEBI" id="CHEBI:29991"/>
    </ligand>
</feature>
<feature type="binding site" evidence="1">
    <location>
        <position position="280"/>
    </location>
    <ligand>
        <name>carbamoyl phosphate</name>
        <dbReference type="ChEBI" id="CHEBI:58228"/>
    </ligand>
</feature>
<feature type="binding site" evidence="1">
    <location>
        <position position="281"/>
    </location>
    <ligand>
        <name>carbamoyl phosphate</name>
        <dbReference type="ChEBI" id="CHEBI:58228"/>
    </ligand>
</feature>
<dbReference type="EC" id="2.1.3.2" evidence="1"/>
<dbReference type="EMBL" id="CP000438">
    <property type="protein sequence ID" value="ABJ15369.1"/>
    <property type="molecule type" value="Genomic_DNA"/>
</dbReference>
<dbReference type="RefSeq" id="WP_003084569.1">
    <property type="nucleotide sequence ID" value="NZ_CP034244.1"/>
</dbReference>
<dbReference type="SMR" id="Q02U10"/>
<dbReference type="KEGG" id="pau:PA14_05260"/>
<dbReference type="PseudoCAP" id="PA14_05260"/>
<dbReference type="HOGENOM" id="CLU_043846_2_0_6"/>
<dbReference type="BioCyc" id="PAER208963:G1G74-437-MONOMER"/>
<dbReference type="UniPathway" id="UPA00070">
    <property type="reaction ID" value="UER00116"/>
</dbReference>
<dbReference type="Proteomes" id="UP000000653">
    <property type="component" value="Chromosome"/>
</dbReference>
<dbReference type="GO" id="GO:0005829">
    <property type="term" value="C:cytosol"/>
    <property type="evidence" value="ECO:0007669"/>
    <property type="project" value="TreeGrafter"/>
</dbReference>
<dbReference type="GO" id="GO:0016597">
    <property type="term" value="F:amino acid binding"/>
    <property type="evidence" value="ECO:0007669"/>
    <property type="project" value="InterPro"/>
</dbReference>
<dbReference type="GO" id="GO:0004070">
    <property type="term" value="F:aspartate carbamoyltransferase activity"/>
    <property type="evidence" value="ECO:0007669"/>
    <property type="project" value="UniProtKB-UniRule"/>
</dbReference>
<dbReference type="GO" id="GO:0006207">
    <property type="term" value="P:'de novo' pyrimidine nucleobase biosynthetic process"/>
    <property type="evidence" value="ECO:0007669"/>
    <property type="project" value="InterPro"/>
</dbReference>
<dbReference type="GO" id="GO:0044205">
    <property type="term" value="P:'de novo' UMP biosynthetic process"/>
    <property type="evidence" value="ECO:0007669"/>
    <property type="project" value="UniProtKB-UniRule"/>
</dbReference>
<dbReference type="GO" id="GO:0006520">
    <property type="term" value="P:amino acid metabolic process"/>
    <property type="evidence" value="ECO:0007669"/>
    <property type="project" value="InterPro"/>
</dbReference>
<dbReference type="FunFam" id="3.40.50.1370:FF:000006">
    <property type="entry name" value="Aspartate carbamoyltransferase"/>
    <property type="match status" value="1"/>
</dbReference>
<dbReference type="FunFam" id="3.40.50.1370:FF:000007">
    <property type="entry name" value="Aspartate carbamoyltransferase"/>
    <property type="match status" value="1"/>
</dbReference>
<dbReference type="Gene3D" id="3.40.50.1370">
    <property type="entry name" value="Aspartate/ornithine carbamoyltransferase"/>
    <property type="match status" value="2"/>
</dbReference>
<dbReference type="HAMAP" id="MF_00001">
    <property type="entry name" value="Asp_carb_tr"/>
    <property type="match status" value="1"/>
</dbReference>
<dbReference type="InterPro" id="IPR006132">
    <property type="entry name" value="Asp/Orn_carbamoyltranf_P-bd"/>
</dbReference>
<dbReference type="InterPro" id="IPR006130">
    <property type="entry name" value="Asp/Orn_carbamoylTrfase"/>
</dbReference>
<dbReference type="InterPro" id="IPR036901">
    <property type="entry name" value="Asp/Orn_carbamoylTrfase_sf"/>
</dbReference>
<dbReference type="InterPro" id="IPR002082">
    <property type="entry name" value="Asp_carbamoyltransf"/>
</dbReference>
<dbReference type="InterPro" id="IPR006131">
    <property type="entry name" value="Asp_carbamoyltransf_Asp/Orn-bd"/>
</dbReference>
<dbReference type="NCBIfam" id="TIGR00670">
    <property type="entry name" value="asp_carb_tr"/>
    <property type="match status" value="1"/>
</dbReference>
<dbReference type="NCBIfam" id="NF002032">
    <property type="entry name" value="PRK00856.1"/>
    <property type="match status" value="1"/>
</dbReference>
<dbReference type="PANTHER" id="PTHR45753:SF6">
    <property type="entry name" value="ASPARTATE CARBAMOYLTRANSFERASE"/>
    <property type="match status" value="1"/>
</dbReference>
<dbReference type="PANTHER" id="PTHR45753">
    <property type="entry name" value="ORNITHINE CARBAMOYLTRANSFERASE, MITOCHONDRIAL"/>
    <property type="match status" value="1"/>
</dbReference>
<dbReference type="Pfam" id="PF00185">
    <property type="entry name" value="OTCace"/>
    <property type="match status" value="1"/>
</dbReference>
<dbReference type="Pfam" id="PF02729">
    <property type="entry name" value="OTCace_N"/>
    <property type="match status" value="1"/>
</dbReference>
<dbReference type="PRINTS" id="PR00100">
    <property type="entry name" value="AOTCASE"/>
</dbReference>
<dbReference type="PRINTS" id="PR00101">
    <property type="entry name" value="ATCASE"/>
</dbReference>
<dbReference type="SUPFAM" id="SSF53671">
    <property type="entry name" value="Aspartate/ornithine carbamoyltransferase"/>
    <property type="match status" value="1"/>
</dbReference>
<dbReference type="PROSITE" id="PS00097">
    <property type="entry name" value="CARBAMOYLTRANSFERASE"/>
    <property type="match status" value="1"/>
</dbReference>
<comment type="function">
    <text evidence="1">Catalyzes the condensation of carbamoyl phosphate and aspartate to form carbamoyl aspartate and inorganic phosphate, the committed step in the de novo pyrimidine nucleotide biosynthesis pathway.</text>
</comment>
<comment type="catalytic activity">
    <reaction evidence="1">
        <text>carbamoyl phosphate + L-aspartate = N-carbamoyl-L-aspartate + phosphate + H(+)</text>
        <dbReference type="Rhea" id="RHEA:20013"/>
        <dbReference type="ChEBI" id="CHEBI:15378"/>
        <dbReference type="ChEBI" id="CHEBI:29991"/>
        <dbReference type="ChEBI" id="CHEBI:32814"/>
        <dbReference type="ChEBI" id="CHEBI:43474"/>
        <dbReference type="ChEBI" id="CHEBI:58228"/>
        <dbReference type="EC" id="2.1.3.2"/>
    </reaction>
</comment>
<comment type="pathway">
    <text evidence="1">Pyrimidine metabolism; UMP biosynthesis via de novo pathway; (S)-dihydroorotate from bicarbonate: step 2/3.</text>
</comment>
<comment type="subunit">
    <text evidence="1">Heterododecamer (2C3:3R2) of six catalytic PyrB chains organized as two trimers (C3), and six regulatory PyrI chains organized as three dimers (R2).</text>
</comment>
<comment type="similarity">
    <text evidence="1">Belongs to the aspartate/ornithine carbamoyltransferase superfamily. ATCase family.</text>
</comment>